<organism>
    <name type="scientific">Litchfieldella anticariensis (strain DSM 16096 / CECT 5854 / CIP 108499 / LMG 22089 / FP35)</name>
    <name type="common">Halomonas anticariensis</name>
    <dbReference type="NCBI Taxonomy" id="1121939"/>
    <lineage>
        <taxon>Bacteria</taxon>
        <taxon>Pseudomonadati</taxon>
        <taxon>Pseudomonadota</taxon>
        <taxon>Gammaproteobacteria</taxon>
        <taxon>Oceanospirillales</taxon>
        <taxon>Halomonadaceae</taxon>
        <taxon>Litchfieldella</taxon>
    </lineage>
</organism>
<dbReference type="EC" id="2.3.1.-" evidence="1 2"/>
<dbReference type="EC" id="2.3.1.46" evidence="2"/>
<dbReference type="EMBL" id="ASTJ01000035">
    <property type="protein sequence ID" value="EPC01480.1"/>
    <property type="molecule type" value="Genomic_DNA"/>
</dbReference>
<dbReference type="RefSeq" id="WP_016417653.1">
    <property type="nucleotide sequence ID" value="NZ_KE332392.1"/>
</dbReference>
<dbReference type="SMR" id="S2KHP1"/>
<dbReference type="STRING" id="1121939.L861_05420"/>
<dbReference type="ESTHER" id="halaf-sst">
    <property type="family name" value="Homoserine_transacetylase"/>
</dbReference>
<dbReference type="PATRIC" id="fig|1121939.11.peg.3135"/>
<dbReference type="eggNOG" id="COG2021">
    <property type="taxonomic scope" value="Bacteria"/>
</dbReference>
<dbReference type="OrthoDB" id="9800754at2"/>
<dbReference type="UniPathway" id="UPA00136">
    <property type="reaction ID" value="UER00199"/>
</dbReference>
<dbReference type="Proteomes" id="UP000014463">
    <property type="component" value="Unassembled WGS sequence"/>
</dbReference>
<dbReference type="GO" id="GO:0005737">
    <property type="term" value="C:cytoplasm"/>
    <property type="evidence" value="ECO:0007669"/>
    <property type="project" value="UniProtKB-SubCell"/>
</dbReference>
<dbReference type="GO" id="GO:0004414">
    <property type="term" value="F:homoserine O-acetyltransferase activity"/>
    <property type="evidence" value="ECO:0007669"/>
    <property type="project" value="TreeGrafter"/>
</dbReference>
<dbReference type="GO" id="GO:0008899">
    <property type="term" value="F:homoserine O-succinyltransferase activity"/>
    <property type="evidence" value="ECO:0007669"/>
    <property type="project" value="UniProtKB-EC"/>
</dbReference>
<dbReference type="GO" id="GO:0160210">
    <property type="term" value="F:L-serine O-succinyltransferase activity"/>
    <property type="evidence" value="ECO:0007669"/>
    <property type="project" value="RHEA"/>
</dbReference>
<dbReference type="GO" id="GO:0006535">
    <property type="term" value="P:cysteine biosynthetic process from serine"/>
    <property type="evidence" value="ECO:0007669"/>
    <property type="project" value="UniProtKB-UniRule"/>
</dbReference>
<dbReference type="GO" id="GO:0009092">
    <property type="term" value="P:homoserine metabolic process"/>
    <property type="evidence" value="ECO:0007669"/>
    <property type="project" value="TreeGrafter"/>
</dbReference>
<dbReference type="GO" id="GO:0009086">
    <property type="term" value="P:methionine biosynthetic process"/>
    <property type="evidence" value="ECO:0007669"/>
    <property type="project" value="TreeGrafter"/>
</dbReference>
<dbReference type="Gene3D" id="1.10.1740.110">
    <property type="match status" value="1"/>
</dbReference>
<dbReference type="Gene3D" id="3.40.50.1820">
    <property type="entry name" value="alpha/beta hydrolase"/>
    <property type="match status" value="1"/>
</dbReference>
<dbReference type="HAMAP" id="MF_00296">
    <property type="entry name" value="MetX_acyltransf"/>
    <property type="match status" value="1"/>
</dbReference>
<dbReference type="InterPro" id="IPR000073">
    <property type="entry name" value="AB_hydrolase_1"/>
</dbReference>
<dbReference type="InterPro" id="IPR029058">
    <property type="entry name" value="AB_hydrolase_fold"/>
</dbReference>
<dbReference type="InterPro" id="IPR008220">
    <property type="entry name" value="HAT_MetX-like"/>
</dbReference>
<dbReference type="NCBIfam" id="TIGR01392">
    <property type="entry name" value="homoserO_Ac_trn"/>
    <property type="match status" value="1"/>
</dbReference>
<dbReference type="NCBIfam" id="NF001209">
    <property type="entry name" value="PRK00175.1"/>
    <property type="match status" value="1"/>
</dbReference>
<dbReference type="PANTHER" id="PTHR32268">
    <property type="entry name" value="HOMOSERINE O-ACETYLTRANSFERASE"/>
    <property type="match status" value="1"/>
</dbReference>
<dbReference type="PANTHER" id="PTHR32268:SF11">
    <property type="entry name" value="HOMOSERINE O-ACETYLTRANSFERASE"/>
    <property type="match status" value="1"/>
</dbReference>
<dbReference type="Pfam" id="PF00561">
    <property type="entry name" value="Abhydrolase_1"/>
    <property type="match status" value="1"/>
</dbReference>
<dbReference type="PIRSF" id="PIRSF000443">
    <property type="entry name" value="Homoser_Ac_trans"/>
    <property type="match status" value="1"/>
</dbReference>
<dbReference type="SUPFAM" id="SSF53474">
    <property type="entry name" value="alpha/beta-Hydrolases"/>
    <property type="match status" value="1"/>
</dbReference>
<reference key="1">
    <citation type="journal article" date="2013" name="Genome Announc.">
        <title>Draft genome sequence of the moderately halophilic gammaproteobacterium Halomonas anticariensis FP35.</title>
        <authorList>
            <person name="Tahrioui A."/>
            <person name="Quesada E."/>
            <person name="Llamas I."/>
        </authorList>
    </citation>
    <scope>NUCLEOTIDE SEQUENCE [LARGE SCALE GENOMIC DNA]</scope>
    <source>
        <strain>DSM 16096 / CECT 5854 / CIP 108499 / LMG 22089 / FP35</strain>
    </source>
</reference>
<reference key="2">
    <citation type="journal article" date="2017" name="Nat. Chem. Biol.">
        <title>Parallel evolution of non-homologous isofunctional enzymes in methionine biosynthesis.</title>
        <authorList>
            <person name="Bastard K."/>
            <person name="Perret A."/>
            <person name="Mariage A."/>
            <person name="Bessonnet T."/>
            <person name="Pinet-Turpault A."/>
            <person name="Petit J.L."/>
            <person name="Darii E."/>
            <person name="Bazire P."/>
            <person name="Vergne-Vaxelaire C."/>
            <person name="Brewee C."/>
            <person name="Debard A."/>
            <person name="Pellouin V."/>
            <person name="Besnard-Gonnet M."/>
            <person name="Artiguenave F."/>
            <person name="Medigue C."/>
            <person name="Vallenet D."/>
            <person name="Danchin A."/>
            <person name="Zaparucha A."/>
            <person name="Weissenbach J."/>
            <person name="Salanoubat M."/>
            <person name="de Berardinis V."/>
        </authorList>
    </citation>
    <scope>FUNCTION</scope>
    <scope>CATALYTIC ACTIVITY</scope>
    <scope>PATHWAY</scope>
</reference>
<sequence length="367" mass="39929">MPDARRFIELPGPVRMYRGGELPSVTIAYETWGELRGQGDNALLLFTGLSPSAHAASSMADPSPGWWEYMIGPGKPIDTERFFVIAINSLGSCFGSTGPASINPATGQPYRLDFPKLSVEDIVAAARGACRALGIDHVHTVAGASLGGMDALAYAVMYPGTYRDIISISAAAHATPFTIALRSIQREAVRADPAWAGGNYAPGEGPKDGMRVARQLGILTYRSAEEWLQRFDRERLEGSDDSANPFAMAFQVQSYMEANARKFADRFDANCYLYLSQAMDLFDMAEHGDGSLEAAVRRIDAKRALVAGVTTDWLFPLWQQRQVAELLEHAGVAVSYHELGSIQGHDAFLVDSERFAPMVAEFLAHSS</sequence>
<proteinExistence type="evidence at protein level"/>
<feature type="chain" id="PRO_0000440308" description="Serine O-succinyltransferase">
    <location>
        <begin position="1"/>
        <end position="367"/>
    </location>
</feature>
<feature type="domain" description="AB hydrolase-1" evidence="1">
    <location>
        <begin position="41"/>
        <end position="349"/>
    </location>
</feature>
<feature type="region of interest" description="Important for substrate specificity" evidence="1 5">
    <location>
        <begin position="48"/>
        <end position="51"/>
    </location>
</feature>
<feature type="active site" description="Nucleophile" evidence="1">
    <location>
        <position position="145"/>
    </location>
</feature>
<feature type="active site" evidence="1">
    <location>
        <position position="312"/>
    </location>
</feature>
<feature type="active site" evidence="1">
    <location>
        <position position="345"/>
    </location>
</feature>
<feature type="binding site" evidence="1">
    <location>
        <position position="214"/>
    </location>
    <ligand>
        <name>substrate</name>
    </ligand>
</feature>
<feature type="binding site" evidence="1">
    <location>
        <position position="346"/>
    </location>
    <ligand>
        <name>substrate</name>
    </ligand>
</feature>
<feature type="site" description="Important for acyl-CoA specificity" evidence="1 5">
    <location>
        <position position="182"/>
    </location>
</feature>
<name>SST_LITA3</name>
<gene>
    <name evidence="6" type="ORF">L861_05420</name>
</gene>
<keyword id="KW-0012">Acyltransferase</keyword>
<keyword id="KW-0028">Amino-acid biosynthesis</keyword>
<keyword id="KW-0198">Cysteine biosynthesis</keyword>
<keyword id="KW-0963">Cytoplasm</keyword>
<keyword id="KW-1185">Reference proteome</keyword>
<keyword id="KW-0808">Transferase</keyword>
<accession>S2KHP1</accession>
<protein>
    <recommendedName>
        <fullName evidence="1 4">Serine O-succinyltransferase</fullName>
        <shortName evidence="1 3">SST</shortName>
        <ecNumber evidence="1 2">2.3.1.-</ecNumber>
    </recommendedName>
    <alternativeName>
        <fullName evidence="4">Homoserine O-succinyltransferase</fullName>
        <shortName evidence="3">HST</shortName>
        <ecNumber evidence="2">2.3.1.46</ecNumber>
    </alternativeName>
    <alternativeName>
        <fullName evidence="4">Homoserine transsuccinylase</fullName>
        <shortName evidence="4">HTS</shortName>
    </alternativeName>
</protein>
<comment type="function">
    <text evidence="2">Transfers a succinyl group from succinyl-CoA to L-serine, forming succinyl-L-serine. In vitro, also has homoserine succinyl transferase activity.</text>
</comment>
<comment type="catalytic activity">
    <reaction evidence="1 2">
        <text>succinyl-CoA + L-serine = O-succinyl-L-serine + CoA</text>
        <dbReference type="Rhea" id="RHEA:52820"/>
        <dbReference type="ChEBI" id="CHEBI:33384"/>
        <dbReference type="ChEBI" id="CHEBI:57287"/>
        <dbReference type="ChEBI" id="CHEBI:57292"/>
        <dbReference type="ChEBI" id="CHEBI:136856"/>
    </reaction>
</comment>
<comment type="catalytic activity">
    <reaction evidence="2">
        <text>L-homoserine + succinyl-CoA = O-succinyl-L-homoserine + CoA</text>
        <dbReference type="Rhea" id="RHEA:22008"/>
        <dbReference type="ChEBI" id="CHEBI:57287"/>
        <dbReference type="ChEBI" id="CHEBI:57292"/>
        <dbReference type="ChEBI" id="CHEBI:57476"/>
        <dbReference type="ChEBI" id="CHEBI:57661"/>
        <dbReference type="EC" id="2.3.1.46"/>
    </reaction>
</comment>
<comment type="pathway">
    <text evidence="1 5">Amino-acid biosynthesis; L-cysteine biosynthesis; L-cysteine from L-serine: step 1/2.</text>
</comment>
<comment type="subunit">
    <text evidence="1">Homodimer.</text>
</comment>
<comment type="subcellular location">
    <subcellularLocation>
        <location evidence="1">Cytoplasm</location>
    </subcellularLocation>
</comment>
<comment type="similarity">
    <text evidence="1">Belongs to the AB hydrolase superfamily. MetX family.</text>
</comment>
<evidence type="ECO:0000255" key="1">
    <source>
        <dbReference type="HAMAP-Rule" id="MF_00296"/>
    </source>
</evidence>
<evidence type="ECO:0000269" key="2">
    <source>
    </source>
</evidence>
<evidence type="ECO:0000303" key="3">
    <source>
    </source>
</evidence>
<evidence type="ECO:0000305" key="4"/>
<evidence type="ECO:0000305" key="5">
    <source>
    </source>
</evidence>
<evidence type="ECO:0000312" key="6">
    <source>
        <dbReference type="EMBL" id="EPC01480.1"/>
    </source>
</evidence>